<dbReference type="EC" id="2.7.7.18" evidence="1"/>
<dbReference type="EMBL" id="BA000019">
    <property type="protein sequence ID" value="BAB76762.1"/>
    <property type="molecule type" value="Genomic_DNA"/>
</dbReference>
<dbReference type="PIR" id="AG2438">
    <property type="entry name" value="AG2438"/>
</dbReference>
<dbReference type="RefSeq" id="WP_010999189.1">
    <property type="nucleotide sequence ID" value="NZ_RSCN01000014.1"/>
</dbReference>
<dbReference type="SMR" id="Q8YM77"/>
<dbReference type="STRING" id="103690.gene:10497121"/>
<dbReference type="KEGG" id="ana:all5063"/>
<dbReference type="eggNOG" id="COG1057">
    <property type="taxonomic scope" value="Bacteria"/>
</dbReference>
<dbReference type="OrthoDB" id="5295945at2"/>
<dbReference type="UniPathway" id="UPA00253">
    <property type="reaction ID" value="UER00332"/>
</dbReference>
<dbReference type="Proteomes" id="UP000002483">
    <property type="component" value="Chromosome"/>
</dbReference>
<dbReference type="GO" id="GO:0005524">
    <property type="term" value="F:ATP binding"/>
    <property type="evidence" value="ECO:0007669"/>
    <property type="project" value="UniProtKB-KW"/>
</dbReference>
<dbReference type="GO" id="GO:0004515">
    <property type="term" value="F:nicotinate-nucleotide adenylyltransferase activity"/>
    <property type="evidence" value="ECO:0007669"/>
    <property type="project" value="UniProtKB-UniRule"/>
</dbReference>
<dbReference type="GO" id="GO:0009435">
    <property type="term" value="P:NAD biosynthetic process"/>
    <property type="evidence" value="ECO:0007669"/>
    <property type="project" value="UniProtKB-UniRule"/>
</dbReference>
<dbReference type="CDD" id="cd02165">
    <property type="entry name" value="NMNAT"/>
    <property type="match status" value="1"/>
</dbReference>
<dbReference type="Gene3D" id="3.40.50.620">
    <property type="entry name" value="HUPs"/>
    <property type="match status" value="1"/>
</dbReference>
<dbReference type="HAMAP" id="MF_00244">
    <property type="entry name" value="NaMN_adenylyltr"/>
    <property type="match status" value="1"/>
</dbReference>
<dbReference type="InterPro" id="IPR004821">
    <property type="entry name" value="Cyt_trans-like"/>
</dbReference>
<dbReference type="InterPro" id="IPR005248">
    <property type="entry name" value="NadD/NMNAT"/>
</dbReference>
<dbReference type="InterPro" id="IPR014729">
    <property type="entry name" value="Rossmann-like_a/b/a_fold"/>
</dbReference>
<dbReference type="NCBIfam" id="TIGR00125">
    <property type="entry name" value="cyt_tran_rel"/>
    <property type="match status" value="1"/>
</dbReference>
<dbReference type="NCBIfam" id="TIGR00482">
    <property type="entry name" value="nicotinate (nicotinamide) nucleotide adenylyltransferase"/>
    <property type="match status" value="1"/>
</dbReference>
<dbReference type="NCBIfam" id="NF000840">
    <property type="entry name" value="PRK00071.1-3"/>
    <property type="match status" value="1"/>
</dbReference>
<dbReference type="PANTHER" id="PTHR39321">
    <property type="entry name" value="NICOTINATE-NUCLEOTIDE ADENYLYLTRANSFERASE-RELATED"/>
    <property type="match status" value="1"/>
</dbReference>
<dbReference type="PANTHER" id="PTHR39321:SF3">
    <property type="entry name" value="PHOSPHOPANTETHEINE ADENYLYLTRANSFERASE"/>
    <property type="match status" value="1"/>
</dbReference>
<dbReference type="Pfam" id="PF01467">
    <property type="entry name" value="CTP_transf_like"/>
    <property type="match status" value="1"/>
</dbReference>
<dbReference type="SUPFAM" id="SSF52374">
    <property type="entry name" value="Nucleotidylyl transferase"/>
    <property type="match status" value="1"/>
</dbReference>
<keyword id="KW-0067">ATP-binding</keyword>
<keyword id="KW-0520">NAD</keyword>
<keyword id="KW-0547">Nucleotide-binding</keyword>
<keyword id="KW-0548">Nucleotidyltransferase</keyword>
<keyword id="KW-0662">Pyridine nucleotide biosynthesis</keyword>
<keyword id="KW-1185">Reference proteome</keyword>
<keyword id="KW-0808">Transferase</keyword>
<protein>
    <recommendedName>
        <fullName evidence="1">Probable nicotinate-nucleotide adenylyltransferase</fullName>
        <ecNumber evidence="1">2.7.7.18</ecNumber>
    </recommendedName>
    <alternativeName>
        <fullName evidence="1">Deamido-NAD(+) diphosphorylase</fullName>
    </alternativeName>
    <alternativeName>
        <fullName evidence="1">Deamido-NAD(+) pyrophosphorylase</fullName>
    </alternativeName>
    <alternativeName>
        <fullName evidence="1">Nicotinate mononucleotide adenylyltransferase</fullName>
        <shortName evidence="1">NaMN adenylyltransferase</shortName>
    </alternativeName>
</protein>
<proteinExistence type="inferred from homology"/>
<accession>Q8YM77</accession>
<sequence>MQHLAVFGGTFDPIHWGHLLIAEAALQQIPIEKVIWVPSLNPPHKKASAFRHRLAMLQLATQDNPAFTVSSVEKNRSGVSYAINTLTDLSVCFPNTHWYWIVGLDTFQTLPRWYRGQELAPMCDWLIAPRLVGGENIAQSELICKQVKQQLRKQSDTIHWHLLHIPLVGVSSSLIRKLYRIGKSIRYLVPEDVRSYIAAHKLYSEDSE</sequence>
<organism>
    <name type="scientific">Nostoc sp. (strain PCC 7120 / SAG 25.82 / UTEX 2576)</name>
    <dbReference type="NCBI Taxonomy" id="103690"/>
    <lineage>
        <taxon>Bacteria</taxon>
        <taxon>Bacillati</taxon>
        <taxon>Cyanobacteriota</taxon>
        <taxon>Cyanophyceae</taxon>
        <taxon>Nostocales</taxon>
        <taxon>Nostocaceae</taxon>
        <taxon>Nostoc</taxon>
    </lineage>
</organism>
<reference key="1">
    <citation type="journal article" date="2001" name="DNA Res.">
        <title>Complete genomic sequence of the filamentous nitrogen-fixing cyanobacterium Anabaena sp. strain PCC 7120.</title>
        <authorList>
            <person name="Kaneko T."/>
            <person name="Nakamura Y."/>
            <person name="Wolk C.P."/>
            <person name="Kuritz T."/>
            <person name="Sasamoto S."/>
            <person name="Watanabe A."/>
            <person name="Iriguchi M."/>
            <person name="Ishikawa A."/>
            <person name="Kawashima K."/>
            <person name="Kimura T."/>
            <person name="Kishida Y."/>
            <person name="Kohara M."/>
            <person name="Matsumoto M."/>
            <person name="Matsuno A."/>
            <person name="Muraki A."/>
            <person name="Nakazaki N."/>
            <person name="Shimpo S."/>
            <person name="Sugimoto M."/>
            <person name="Takazawa M."/>
            <person name="Yamada M."/>
            <person name="Yasuda M."/>
            <person name="Tabata S."/>
        </authorList>
    </citation>
    <scope>NUCLEOTIDE SEQUENCE [LARGE SCALE GENOMIC DNA]</scope>
    <source>
        <strain>PCC 7120 / SAG 25.82 / UTEX 2576</strain>
    </source>
</reference>
<name>NADD_NOSS1</name>
<evidence type="ECO:0000255" key="1">
    <source>
        <dbReference type="HAMAP-Rule" id="MF_00244"/>
    </source>
</evidence>
<feature type="chain" id="PRO_0000181377" description="Probable nicotinate-nucleotide adenylyltransferase">
    <location>
        <begin position="1"/>
        <end position="208"/>
    </location>
</feature>
<gene>
    <name evidence="1" type="primary">nadD</name>
    <name type="ordered locus">all5063</name>
</gene>
<comment type="function">
    <text evidence="1">Catalyzes the reversible adenylation of nicotinate mononucleotide (NaMN) to nicotinic acid adenine dinucleotide (NaAD).</text>
</comment>
<comment type="catalytic activity">
    <reaction evidence="1">
        <text>nicotinate beta-D-ribonucleotide + ATP + H(+) = deamido-NAD(+) + diphosphate</text>
        <dbReference type="Rhea" id="RHEA:22860"/>
        <dbReference type="ChEBI" id="CHEBI:15378"/>
        <dbReference type="ChEBI" id="CHEBI:30616"/>
        <dbReference type="ChEBI" id="CHEBI:33019"/>
        <dbReference type="ChEBI" id="CHEBI:57502"/>
        <dbReference type="ChEBI" id="CHEBI:58437"/>
        <dbReference type="EC" id="2.7.7.18"/>
    </reaction>
</comment>
<comment type="pathway">
    <text evidence="1">Cofactor biosynthesis; NAD(+) biosynthesis; deamido-NAD(+) from nicotinate D-ribonucleotide: step 1/1.</text>
</comment>
<comment type="similarity">
    <text evidence="1">Belongs to the NadD family.</text>
</comment>